<protein>
    <recommendedName>
        <fullName>Sphingosine kinase 1</fullName>
        <shortName>SK 1</shortName>
        <shortName>SPK 1</shortName>
        <ecNumber evidence="5">2.7.1.91</ecNumber>
    </recommendedName>
    <alternativeName>
        <fullName>Acetyltransferase SPHK1</fullName>
        <ecNumber>2.3.1.-</ecNumber>
    </alternativeName>
</protein>
<name>SPHK1_RAT</name>
<gene>
    <name type="primary">Sphk1</name>
</gene>
<dbReference type="EC" id="2.7.1.91" evidence="5"/>
<dbReference type="EC" id="2.3.1.-"/>
<dbReference type="EMBL" id="AB049571">
    <property type="protein sequence ID" value="BAB62320.1"/>
    <property type="molecule type" value="mRNA"/>
</dbReference>
<dbReference type="EMBL" id="AB049572">
    <property type="protein sequence ID" value="BAB62321.1"/>
    <property type="molecule type" value="mRNA"/>
</dbReference>
<dbReference type="EMBL" id="AB049573">
    <property type="protein sequence ID" value="BAB62322.1"/>
    <property type="molecule type" value="mRNA"/>
</dbReference>
<dbReference type="EMBL" id="AB049574">
    <property type="protein sequence ID" value="BAB62323.1"/>
    <property type="molecule type" value="mRNA"/>
</dbReference>
<dbReference type="EMBL" id="AB049575">
    <property type="protein sequence ID" value="BAB62324.1"/>
    <property type="molecule type" value="mRNA"/>
</dbReference>
<dbReference type="EMBL" id="BC081738">
    <property type="protein sequence ID" value="AAH81738.1"/>
    <property type="molecule type" value="mRNA"/>
</dbReference>
<dbReference type="RefSeq" id="NP_001257736.1">
    <property type="nucleotide sequence ID" value="NM_001270807.1"/>
</dbReference>
<dbReference type="RefSeq" id="NP_001257737.1">
    <property type="nucleotide sequence ID" value="NM_001270808.1"/>
</dbReference>
<dbReference type="RefSeq" id="NP_001257738.1">
    <property type="nucleotide sequence ID" value="NM_001270809.1"/>
</dbReference>
<dbReference type="RefSeq" id="NP_001257739.1">
    <property type="nucleotide sequence ID" value="NM_001270810.1"/>
</dbReference>
<dbReference type="RefSeq" id="NP_001257740.1">
    <property type="nucleotide sequence ID" value="NM_001270811.1"/>
</dbReference>
<dbReference type="RefSeq" id="NP_596877.2">
    <property type="nucleotide sequence ID" value="NM_133386.3"/>
</dbReference>
<dbReference type="SMR" id="Q91V26"/>
<dbReference type="FunCoup" id="Q91V26">
    <property type="interactions" value="253"/>
</dbReference>
<dbReference type="IntAct" id="Q91V26">
    <property type="interactions" value="1"/>
</dbReference>
<dbReference type="STRING" id="10116.ENSRNOP00000072525"/>
<dbReference type="ChEMBL" id="CHEMBL1075107"/>
<dbReference type="PhosphoSitePlus" id="Q91V26"/>
<dbReference type="PaxDb" id="10116-ENSRNOP00000029296"/>
<dbReference type="GeneID" id="170897"/>
<dbReference type="KEGG" id="rno:170897"/>
<dbReference type="AGR" id="RGD:620048"/>
<dbReference type="CTD" id="8877"/>
<dbReference type="RGD" id="620048">
    <property type="gene designation" value="Sphk1"/>
</dbReference>
<dbReference type="eggNOG" id="KOG1116">
    <property type="taxonomic scope" value="Eukaryota"/>
</dbReference>
<dbReference type="InParanoid" id="Q91V26"/>
<dbReference type="OrthoDB" id="3853857at2759"/>
<dbReference type="PhylomeDB" id="Q91V26"/>
<dbReference type="BRENDA" id="2.7.1.91">
    <property type="organism ID" value="5301"/>
</dbReference>
<dbReference type="Reactome" id="R-RNO-1660661">
    <property type="pathway name" value="Sphingolipid de novo biosynthesis"/>
</dbReference>
<dbReference type="Reactome" id="R-RNO-390471">
    <property type="pathway name" value="Association of TriC/CCT with target proteins during biosynthesis"/>
</dbReference>
<dbReference type="Reactome" id="R-RNO-5218921">
    <property type="pathway name" value="VEGFR2 mediated cell proliferation"/>
</dbReference>
<dbReference type="Reactome" id="R-RNO-9009391">
    <property type="pathway name" value="Extra-nuclear estrogen signaling"/>
</dbReference>
<dbReference type="Reactome" id="R-RNO-9833482">
    <property type="pathway name" value="PKR-mediated signaling"/>
</dbReference>
<dbReference type="SABIO-RK" id="Q91V26"/>
<dbReference type="PRO" id="PR:Q91V26"/>
<dbReference type="Proteomes" id="UP000002494">
    <property type="component" value="Unplaced"/>
</dbReference>
<dbReference type="GO" id="GO:0030424">
    <property type="term" value="C:axon"/>
    <property type="evidence" value="ECO:0000314"/>
    <property type="project" value="RGD"/>
</dbReference>
<dbReference type="GO" id="GO:0005905">
    <property type="term" value="C:clathrin-coated pit"/>
    <property type="evidence" value="ECO:0000250"/>
    <property type="project" value="UniProtKB"/>
</dbReference>
<dbReference type="GO" id="GO:0005737">
    <property type="term" value="C:cytoplasm"/>
    <property type="evidence" value="ECO:0000250"/>
    <property type="project" value="UniProtKB"/>
</dbReference>
<dbReference type="GO" id="GO:0031901">
    <property type="term" value="C:early endosome membrane"/>
    <property type="evidence" value="ECO:0000250"/>
    <property type="project" value="UniProtKB"/>
</dbReference>
<dbReference type="GO" id="GO:0030139">
    <property type="term" value="C:endocytic vesicle"/>
    <property type="evidence" value="ECO:0000250"/>
    <property type="project" value="UniProtKB"/>
</dbReference>
<dbReference type="GO" id="GO:0043231">
    <property type="term" value="C:intracellular membrane-bounded organelle"/>
    <property type="evidence" value="ECO:0000318"/>
    <property type="project" value="GO_Central"/>
</dbReference>
<dbReference type="GO" id="GO:0016020">
    <property type="term" value="C:membrane"/>
    <property type="evidence" value="ECO:0000318"/>
    <property type="project" value="GO_Central"/>
</dbReference>
<dbReference type="GO" id="GO:0005634">
    <property type="term" value="C:nucleus"/>
    <property type="evidence" value="ECO:0000250"/>
    <property type="project" value="UniProtKB"/>
</dbReference>
<dbReference type="GO" id="GO:0005886">
    <property type="term" value="C:plasma membrane"/>
    <property type="evidence" value="ECO:0000266"/>
    <property type="project" value="RGD"/>
</dbReference>
<dbReference type="GO" id="GO:0098793">
    <property type="term" value="C:presynapse"/>
    <property type="evidence" value="ECO:0000266"/>
    <property type="project" value="RGD"/>
</dbReference>
<dbReference type="GO" id="GO:0008021">
    <property type="term" value="C:synaptic vesicle"/>
    <property type="evidence" value="ECO:0000314"/>
    <property type="project" value="RGD"/>
</dbReference>
<dbReference type="GO" id="GO:0016407">
    <property type="term" value="F:acetyltransferase activity"/>
    <property type="evidence" value="ECO:0000250"/>
    <property type="project" value="UniProtKB"/>
</dbReference>
<dbReference type="GO" id="GO:0005524">
    <property type="term" value="F:ATP binding"/>
    <property type="evidence" value="ECO:0000266"/>
    <property type="project" value="RGD"/>
</dbReference>
<dbReference type="GO" id="GO:0005516">
    <property type="term" value="F:calmodulin binding"/>
    <property type="evidence" value="ECO:0000266"/>
    <property type="project" value="RGD"/>
</dbReference>
<dbReference type="GO" id="GO:0017050">
    <property type="term" value="F:D-erythro-sphingosine kinase activity"/>
    <property type="evidence" value="ECO:0000314"/>
    <property type="project" value="RGD"/>
</dbReference>
<dbReference type="GO" id="GO:0003677">
    <property type="term" value="F:DNA binding"/>
    <property type="evidence" value="ECO:0000266"/>
    <property type="project" value="RGD"/>
</dbReference>
<dbReference type="GO" id="GO:0008289">
    <property type="term" value="F:lipid binding"/>
    <property type="evidence" value="ECO:0000250"/>
    <property type="project" value="UniProtKB"/>
</dbReference>
<dbReference type="GO" id="GO:0000287">
    <property type="term" value="F:magnesium ion binding"/>
    <property type="evidence" value="ECO:0000250"/>
    <property type="project" value="UniProtKB"/>
</dbReference>
<dbReference type="GO" id="GO:0051721">
    <property type="term" value="F:protein phosphatase 2A binding"/>
    <property type="evidence" value="ECO:0000266"/>
    <property type="project" value="RGD"/>
</dbReference>
<dbReference type="GO" id="GO:0008481">
    <property type="term" value="F:sphingosine kinase activity"/>
    <property type="evidence" value="ECO:0000250"/>
    <property type="project" value="UniProtKB"/>
</dbReference>
<dbReference type="GO" id="GO:0038036">
    <property type="term" value="F:sphingosine-1-phosphate receptor activity"/>
    <property type="evidence" value="ECO:0000266"/>
    <property type="project" value="RGD"/>
</dbReference>
<dbReference type="GO" id="GO:0001568">
    <property type="term" value="P:blood vessel development"/>
    <property type="evidence" value="ECO:0000266"/>
    <property type="project" value="RGD"/>
</dbReference>
<dbReference type="GO" id="GO:0007420">
    <property type="term" value="P:brain development"/>
    <property type="evidence" value="ECO:0000266"/>
    <property type="project" value="RGD"/>
</dbReference>
<dbReference type="GO" id="GO:0019722">
    <property type="term" value="P:calcium-mediated signaling"/>
    <property type="evidence" value="ECO:0000266"/>
    <property type="project" value="RGD"/>
</dbReference>
<dbReference type="GO" id="GO:0008283">
    <property type="term" value="P:cell population proliferation"/>
    <property type="evidence" value="ECO:0000266"/>
    <property type="project" value="RGD"/>
</dbReference>
<dbReference type="GO" id="GO:0071363">
    <property type="term" value="P:cellular response to growth factor stimulus"/>
    <property type="evidence" value="ECO:0000270"/>
    <property type="project" value="RGD"/>
</dbReference>
<dbReference type="GO" id="GO:0070301">
    <property type="term" value="P:cellular response to hydrogen peroxide"/>
    <property type="evidence" value="ECO:0000270"/>
    <property type="project" value="RGD"/>
</dbReference>
<dbReference type="GO" id="GO:1904628">
    <property type="term" value="P:cellular response to phorbol 13-acetate 12-myristate"/>
    <property type="evidence" value="ECO:0000270"/>
    <property type="project" value="RGD"/>
</dbReference>
<dbReference type="GO" id="GO:0009267">
    <property type="term" value="P:cellular response to starvation"/>
    <property type="evidence" value="ECO:0000270"/>
    <property type="project" value="RGD"/>
</dbReference>
<dbReference type="GO" id="GO:0035924">
    <property type="term" value="P:cellular response to vascular endothelial growth factor stimulus"/>
    <property type="evidence" value="ECO:0000250"/>
    <property type="project" value="UniProtKB"/>
</dbReference>
<dbReference type="GO" id="GO:0019371">
    <property type="term" value="P:cyclooxygenase pathway"/>
    <property type="evidence" value="ECO:0000314"/>
    <property type="project" value="RGD"/>
</dbReference>
<dbReference type="GO" id="GO:0071897">
    <property type="term" value="P:DNA biosynthetic process"/>
    <property type="evidence" value="ECO:0000266"/>
    <property type="project" value="RGD"/>
</dbReference>
<dbReference type="GO" id="GO:0007565">
    <property type="term" value="P:female pregnancy"/>
    <property type="evidence" value="ECO:0000270"/>
    <property type="project" value="RGD"/>
</dbReference>
<dbReference type="GO" id="GO:0006954">
    <property type="term" value="P:inflammatory response"/>
    <property type="evidence" value="ECO:0000266"/>
    <property type="project" value="RGD"/>
</dbReference>
<dbReference type="GO" id="GO:0043066">
    <property type="term" value="P:negative regulation of apoptotic process"/>
    <property type="evidence" value="ECO:0000315"/>
    <property type="project" value="RGD"/>
</dbReference>
<dbReference type="GO" id="GO:1900060">
    <property type="term" value="P:negative regulation of ceramide biosynthetic process"/>
    <property type="evidence" value="ECO:0000250"/>
    <property type="project" value="UniProtKB"/>
</dbReference>
<dbReference type="GO" id="GO:0045766">
    <property type="term" value="P:positive regulation of angiogenesis"/>
    <property type="evidence" value="ECO:0000266"/>
    <property type="project" value="RGD"/>
</dbReference>
<dbReference type="GO" id="GO:0030307">
    <property type="term" value="P:positive regulation of cell growth"/>
    <property type="evidence" value="ECO:0000266"/>
    <property type="project" value="RGD"/>
</dbReference>
<dbReference type="GO" id="GO:0030335">
    <property type="term" value="P:positive regulation of cell migration"/>
    <property type="evidence" value="ECO:0000315"/>
    <property type="project" value="RGD"/>
</dbReference>
<dbReference type="GO" id="GO:0008284">
    <property type="term" value="P:positive regulation of cell population proliferation"/>
    <property type="evidence" value="ECO:0000266"/>
    <property type="project" value="RGD"/>
</dbReference>
<dbReference type="GO" id="GO:0048146">
    <property type="term" value="P:positive regulation of fibroblast proliferation"/>
    <property type="evidence" value="ECO:0000266"/>
    <property type="project" value="RGD"/>
</dbReference>
<dbReference type="GO" id="GO:0032740">
    <property type="term" value="P:positive regulation of interleukin-17 production"/>
    <property type="evidence" value="ECO:0000315"/>
    <property type="project" value="UniProtKB"/>
</dbReference>
<dbReference type="GO" id="GO:0045931">
    <property type="term" value="P:positive regulation of mitotic cell cycle"/>
    <property type="evidence" value="ECO:0000266"/>
    <property type="project" value="RGD"/>
</dbReference>
<dbReference type="GO" id="GO:0045840">
    <property type="term" value="P:positive regulation of mitotic nuclear division"/>
    <property type="evidence" value="ECO:0000266"/>
    <property type="project" value="RGD"/>
</dbReference>
<dbReference type="GO" id="GO:0010976">
    <property type="term" value="P:positive regulation of neuron projection development"/>
    <property type="evidence" value="ECO:0000315"/>
    <property type="project" value="RGD"/>
</dbReference>
<dbReference type="GO" id="GO:0001956">
    <property type="term" value="P:positive regulation of neurotransmitter secretion"/>
    <property type="evidence" value="ECO:0000315"/>
    <property type="project" value="RGD"/>
</dbReference>
<dbReference type="GO" id="GO:0051092">
    <property type="term" value="P:positive regulation of NF-kappaB transcription factor activity"/>
    <property type="evidence" value="ECO:0000315"/>
    <property type="project" value="UniProtKB"/>
</dbReference>
<dbReference type="GO" id="GO:1901224">
    <property type="term" value="P:positive regulation of non-canonical NF-kappaB signal transduction"/>
    <property type="evidence" value="ECO:0000250"/>
    <property type="project" value="UniProtKB"/>
</dbReference>
<dbReference type="GO" id="GO:1900745">
    <property type="term" value="P:positive regulation of p38MAPK cascade"/>
    <property type="evidence" value="ECO:0000250"/>
    <property type="project" value="UniProtKB"/>
</dbReference>
<dbReference type="GO" id="GO:0031398">
    <property type="term" value="P:positive regulation of protein ubiquitination"/>
    <property type="evidence" value="ECO:0000250"/>
    <property type="project" value="UniProtKB"/>
</dbReference>
<dbReference type="GO" id="GO:0045987">
    <property type="term" value="P:positive regulation of smooth muscle contraction"/>
    <property type="evidence" value="ECO:0000266"/>
    <property type="project" value="RGD"/>
</dbReference>
<dbReference type="GO" id="GO:0006473">
    <property type="term" value="P:protein acetylation"/>
    <property type="evidence" value="ECO:0000250"/>
    <property type="project" value="UniProtKB"/>
</dbReference>
<dbReference type="GO" id="GO:0030100">
    <property type="term" value="P:regulation of endocytosis"/>
    <property type="evidence" value="ECO:0000250"/>
    <property type="project" value="UniProtKB"/>
</dbReference>
<dbReference type="GO" id="GO:1905364">
    <property type="term" value="P:regulation of endosomal vesicle fusion"/>
    <property type="evidence" value="ECO:0000250"/>
    <property type="project" value="UniProtKB"/>
</dbReference>
<dbReference type="GO" id="GO:0032651">
    <property type="term" value="P:regulation of interleukin-1 beta production"/>
    <property type="evidence" value="ECO:0000266"/>
    <property type="project" value="RGD"/>
</dbReference>
<dbReference type="GO" id="GO:1903978">
    <property type="term" value="P:regulation of microglial cell activation"/>
    <property type="evidence" value="ECO:0000250"/>
    <property type="project" value="UniProtKB"/>
</dbReference>
<dbReference type="GO" id="GO:0150077">
    <property type="term" value="P:regulation of neuroinflammatory response"/>
    <property type="evidence" value="ECO:0000315"/>
    <property type="project" value="UniProtKB"/>
</dbReference>
<dbReference type="GO" id="GO:0050764">
    <property type="term" value="P:regulation of phagocytosis"/>
    <property type="evidence" value="ECO:0000250"/>
    <property type="project" value="UniProtKB"/>
</dbReference>
<dbReference type="GO" id="GO:0010803">
    <property type="term" value="P:regulation of tumor necrosis factor-mediated signaling pathway"/>
    <property type="evidence" value="ECO:0000315"/>
    <property type="project" value="UniProtKB"/>
</dbReference>
<dbReference type="GO" id="GO:0014075">
    <property type="term" value="P:response to amine"/>
    <property type="evidence" value="ECO:0000270"/>
    <property type="project" value="RGD"/>
</dbReference>
<dbReference type="GO" id="GO:0033198">
    <property type="term" value="P:response to ATP"/>
    <property type="evidence" value="ECO:0000270"/>
    <property type="project" value="RGD"/>
</dbReference>
<dbReference type="GO" id="GO:0070555">
    <property type="term" value="P:response to interleukin-1"/>
    <property type="evidence" value="ECO:0000270"/>
    <property type="project" value="RGD"/>
</dbReference>
<dbReference type="GO" id="GO:0032026">
    <property type="term" value="P:response to magnesium ion"/>
    <property type="evidence" value="ECO:0000270"/>
    <property type="project" value="RGD"/>
</dbReference>
<dbReference type="GO" id="GO:0032570">
    <property type="term" value="P:response to progesterone"/>
    <property type="evidence" value="ECO:0000270"/>
    <property type="project" value="RGD"/>
</dbReference>
<dbReference type="GO" id="GO:0034612">
    <property type="term" value="P:response to tumor necrosis factor"/>
    <property type="evidence" value="ECO:0000250"/>
    <property type="project" value="UniProtKB"/>
</dbReference>
<dbReference type="GO" id="GO:0090520">
    <property type="term" value="P:sphingolipid mediated signaling pathway"/>
    <property type="evidence" value="ECO:0000266"/>
    <property type="project" value="RGD"/>
</dbReference>
<dbReference type="GO" id="GO:0046512">
    <property type="term" value="P:sphingosine biosynthetic process"/>
    <property type="evidence" value="ECO:0000266"/>
    <property type="project" value="RGD"/>
</dbReference>
<dbReference type="GO" id="GO:0006670">
    <property type="term" value="P:sphingosine metabolic process"/>
    <property type="evidence" value="ECO:0000250"/>
    <property type="project" value="UniProtKB"/>
</dbReference>
<dbReference type="FunFam" id="2.60.200.40:FF:000010">
    <property type="entry name" value="Sphingosine kinase 1"/>
    <property type="match status" value="1"/>
</dbReference>
<dbReference type="FunFam" id="3.40.50.10330:FF:000005">
    <property type="entry name" value="Sphingosine kinase 2"/>
    <property type="match status" value="1"/>
</dbReference>
<dbReference type="Gene3D" id="2.60.200.40">
    <property type="match status" value="1"/>
</dbReference>
<dbReference type="Gene3D" id="3.40.50.10330">
    <property type="entry name" value="Probable inorganic polyphosphate/atp-NAD kinase, domain 1"/>
    <property type="match status" value="1"/>
</dbReference>
<dbReference type="InterPro" id="IPR017438">
    <property type="entry name" value="ATP-NAD_kinase_N"/>
</dbReference>
<dbReference type="InterPro" id="IPR001206">
    <property type="entry name" value="Diacylglycerol_kinase_cat_dom"/>
</dbReference>
<dbReference type="InterPro" id="IPR050187">
    <property type="entry name" value="Lipid_Phosphate_FormReg"/>
</dbReference>
<dbReference type="InterPro" id="IPR016064">
    <property type="entry name" value="NAD/diacylglycerol_kinase_sf"/>
</dbReference>
<dbReference type="PANTHER" id="PTHR12358">
    <property type="entry name" value="SPHINGOSINE KINASE"/>
    <property type="match status" value="1"/>
</dbReference>
<dbReference type="PANTHER" id="PTHR12358:SF47">
    <property type="entry name" value="SPHINGOSINE KINASE 1"/>
    <property type="match status" value="1"/>
</dbReference>
<dbReference type="Pfam" id="PF00781">
    <property type="entry name" value="DAGK_cat"/>
    <property type="match status" value="1"/>
</dbReference>
<dbReference type="SMART" id="SM00046">
    <property type="entry name" value="DAGKc"/>
    <property type="match status" value="1"/>
</dbReference>
<dbReference type="SUPFAM" id="SSF111331">
    <property type="entry name" value="NAD kinase/diacylglycerol kinase-like"/>
    <property type="match status" value="1"/>
</dbReference>
<dbReference type="PROSITE" id="PS50146">
    <property type="entry name" value="DAGK"/>
    <property type="match status" value="1"/>
</dbReference>
<keyword id="KW-0067">ATP-binding</keyword>
<keyword id="KW-0112">Calmodulin-binding</keyword>
<keyword id="KW-1003">Cell membrane</keyword>
<keyword id="KW-0168">Coated pit</keyword>
<keyword id="KW-0963">Cytoplasm</keyword>
<keyword id="KW-0967">Endosome</keyword>
<keyword id="KW-0418">Kinase</keyword>
<keyword id="KW-0443">Lipid metabolism</keyword>
<keyword id="KW-0472">Membrane</keyword>
<keyword id="KW-0547">Nucleotide-binding</keyword>
<keyword id="KW-0539">Nucleus</keyword>
<keyword id="KW-0597">Phosphoprotein</keyword>
<keyword id="KW-1185">Reference proteome</keyword>
<keyword id="KW-0770">Synapse</keyword>
<keyword id="KW-0808">Transferase</keyword>
<organism>
    <name type="scientific">Rattus norvegicus</name>
    <name type="common">Rat</name>
    <dbReference type="NCBI Taxonomy" id="10116"/>
    <lineage>
        <taxon>Eukaryota</taxon>
        <taxon>Metazoa</taxon>
        <taxon>Chordata</taxon>
        <taxon>Craniata</taxon>
        <taxon>Vertebrata</taxon>
        <taxon>Euteleostomi</taxon>
        <taxon>Mammalia</taxon>
        <taxon>Eutheria</taxon>
        <taxon>Euarchontoglires</taxon>
        <taxon>Glires</taxon>
        <taxon>Rodentia</taxon>
        <taxon>Myomorpha</taxon>
        <taxon>Muroidea</taxon>
        <taxon>Muridae</taxon>
        <taxon>Murinae</taxon>
        <taxon>Rattus</taxon>
    </lineage>
</organism>
<sequence>MQPADCPRGLLPRPCRVLVLLNPRGGKGKALKLFQSRVRPLLEEAEVSFKLMLTERQNHARELVCAEELGHWDALAVMSGDGLMHEVVNGLMERPDWESAIQKPLCSLPGGSGNALAASLNYYAGHEQVTNEDLLINCTLLLCCRQLSPMNLLSLHTASGRQLYSVLSLSWGFVADVDLESEKYRSLGEIRFTVGTFFRLASLRIYQGQLAYLPVGKAASKIPASSLAQKGPANTYLVPLEEPVPPHWTVVPEQDFVLVLVLLHTHLSTEMFAAPMGRCEAGVMHLFYIRAGVSRAMLVRLFLAMQKGKHMDLDCPYLVHVPVVAFRLEPRNQRGVFSVDGELMVCEAVQGQVHPNYLWMVSGSSDSPSGRDSQRRPPPEEPI</sequence>
<comment type="function">
    <text evidence="2 5 7 9">Catalyzes the phosphorylation of sphingosine to form sphingosine 1-phosphate (SPP), a lipid mediator with both intra- and extracellular functions. Also acts on D-erythro-sphingosine and to a lesser extent sphinganine, but not other lipids, such as D,L-threo-dihydrosphingosine, N,N-dimethylsphingosine, diacylglycerol, ceramide, or phosphatidylinositol (Probable) (PubMed:16118219). In contrast to proapoptotic SPHK2, has a negative effect on intracellular ceramide levels, enhances cell growth and inhibits apoptosis (By similarity). Involved in the regulation of inflammatory response and neuroinflammation. Via the product sphingosine 1-phosphate, stimulates TRAF2 E3 ubiquitin ligase activity, and promotes activation of NF-kappa-B in response to TNF signaling leading to IL17 secretion (PubMed:28284343). In response to TNF and in parallel to NF-kappa-B activation, negatively regulates RANTES induction through p38 MAPK signaling pathway. Involved in endocytic membrane trafficking induced by sphingosine, recruited to dilate endosomes, also plays a role on later stages of endosomal maturation and membrane fusion independently of its kinase activity. In Purkinje cells, seems to be also involved in the regulation of autophagosome-lysosome fusion upon VEGFA (By similarity).</text>
</comment>
<comment type="function">
    <text evidence="1">Has serine acetyltransferase activity on PTGS2/COX2 in an acetyl-CoA dependent manner. The acetyltransferase activity increases in presence of the kinase substrate, sphingosine. During neuroinflammation, through PTGS2 acetylation, promotes neuronal secretion of specialized preresolving mediators (SPMs), especially 15-R-lipoxin A4, which results in an increase of phagocytic microglia.</text>
</comment>
<comment type="catalytic activity">
    <reaction evidence="5 9">
        <text>a sphingoid base + ATP = a sphingoid 1-phosphate + ADP + H(+)</text>
        <dbReference type="Rhea" id="RHEA:51496"/>
        <dbReference type="ChEBI" id="CHEBI:15378"/>
        <dbReference type="ChEBI" id="CHEBI:30616"/>
        <dbReference type="ChEBI" id="CHEBI:76941"/>
        <dbReference type="ChEBI" id="CHEBI:84410"/>
        <dbReference type="ChEBI" id="CHEBI:456216"/>
        <dbReference type="EC" id="2.7.1.91"/>
    </reaction>
    <physiologicalReaction direction="left-to-right" evidence="5">
        <dbReference type="Rhea" id="RHEA:51497"/>
    </physiologicalReaction>
</comment>
<comment type="catalytic activity">
    <reaction evidence="1">
        <text>L-seryl-[protein] + acetyl-CoA = O-acetyl-L-seryl-[protein] + CoA</text>
        <dbReference type="Rhea" id="RHEA:59392"/>
        <dbReference type="Rhea" id="RHEA-COMP:9863"/>
        <dbReference type="Rhea" id="RHEA-COMP:15352"/>
        <dbReference type="ChEBI" id="CHEBI:29999"/>
        <dbReference type="ChEBI" id="CHEBI:57287"/>
        <dbReference type="ChEBI" id="CHEBI:57288"/>
        <dbReference type="ChEBI" id="CHEBI:141128"/>
    </reaction>
    <physiologicalReaction direction="left-to-right" evidence="1">
        <dbReference type="Rhea" id="RHEA:59393"/>
    </physiologicalReaction>
</comment>
<comment type="catalytic activity">
    <reaction evidence="2">
        <text>sphinganine + ATP = sphinganine 1-phosphate + ADP + H(+)</text>
        <dbReference type="Rhea" id="RHEA:15465"/>
        <dbReference type="ChEBI" id="CHEBI:15378"/>
        <dbReference type="ChEBI" id="CHEBI:30616"/>
        <dbReference type="ChEBI" id="CHEBI:57817"/>
        <dbReference type="ChEBI" id="CHEBI:57939"/>
        <dbReference type="ChEBI" id="CHEBI:456216"/>
        <dbReference type="EC" id="2.7.1.91"/>
    </reaction>
</comment>
<comment type="catalytic activity">
    <reaction evidence="2">
        <text>sphing-4-enine + ATP = sphing-4-enine 1-phosphate + ADP + H(+)</text>
        <dbReference type="Rhea" id="RHEA:35847"/>
        <dbReference type="ChEBI" id="CHEBI:15378"/>
        <dbReference type="ChEBI" id="CHEBI:30616"/>
        <dbReference type="ChEBI" id="CHEBI:57756"/>
        <dbReference type="ChEBI" id="CHEBI:60119"/>
        <dbReference type="ChEBI" id="CHEBI:456216"/>
        <dbReference type="EC" id="2.7.1.91"/>
    </reaction>
</comment>
<comment type="catalytic activity">
    <reaction evidence="2">
        <text>1-O-hexadecyl-2-amino-sn-glycerol + ATP = 1-O-hexadecyl-2-desoxy-2-amino-sn-glycero-3-phosphate + ADP + H(+)</text>
        <dbReference type="Rhea" id="RHEA:41163"/>
        <dbReference type="ChEBI" id="CHEBI:15378"/>
        <dbReference type="ChEBI" id="CHEBI:30616"/>
        <dbReference type="ChEBI" id="CHEBI:77786"/>
        <dbReference type="ChEBI" id="CHEBI:77787"/>
        <dbReference type="ChEBI" id="CHEBI:456216"/>
    </reaction>
</comment>
<comment type="cofactor">
    <cofactor evidence="2">
        <name>Mg(2+)</name>
        <dbReference type="ChEBI" id="CHEBI:18420"/>
    </cofactor>
</comment>
<comment type="activity regulation">
    <text evidence="1 2 6">Acetyltransferase activity increases in presence of the kinase substrate, sphingosine (By similarity). In Purkinje cells, kinase activity on sphingosine increases in presence of VEGFA (By similarity). In neurons, kinase activity increases during the first 24h in presence of Amyloid-beta protein 42 to decrease after 96h (PubMed:26334640).</text>
</comment>
<comment type="subunit">
    <text evidence="1 2">Interacts with ACY1 (By similarity). Binds to calmodulin. Interacts with SPHKAP (By similarity). Interacts with CIB1, the interaction occurs in a calcium-dependent manner. Interacts with TRAF2 (By similarity). Interacts with EEF1A1; the interaction enhances SPHK1 kinase activity (By similarity).</text>
</comment>
<comment type="subcellular location">
    <subcellularLocation>
        <location evidence="5">Cytoplasm</location>
    </subcellularLocation>
    <subcellularLocation>
        <location evidence="2">Nucleus</location>
    </subcellularLocation>
    <subcellularLocation>
        <location evidence="2">Cell membrane</location>
    </subcellularLocation>
    <subcellularLocation>
        <location evidence="2">Endosome membrane</location>
        <topology evidence="2">Peripheral membrane protein</topology>
    </subcellularLocation>
    <subcellularLocation>
        <location evidence="2">Membrane</location>
        <location evidence="2">Clathrin-coated pit</location>
    </subcellularLocation>
    <subcellularLocation>
        <location evidence="1">Synapse</location>
    </subcellularLocation>
    <text evidence="1 2">Translocated from the cytoplasm to the plasma membrane in a CIB1-dependent manner. Binds to membranes containing negatively charged lipids but not neutral lipids (By similarity). Recruited to endocytic membranes by sphingosine where promotes membrane fusion (By similarity).</text>
</comment>
<comment type="tissue specificity">
    <text evidence="7">Expressed in microglia (at protein level).</text>
</comment>
<comment type="induction">
    <text evidence="6">In neurons, expression increases during the first 24h in presence of Amyloid-beta protein 42 to decrease after 96h.</text>
</comment>
<accession>Q91V26</accession>
<accession>Q642F6</accession>
<reference key="1">
    <citation type="journal article" date="2001" name="Genomics">
        <title>CpG island of rat sphingosine kinase-1 gene: tissue-dependent DNA methylation status and multiple alternative first exons.</title>
        <authorList>
            <person name="Imamura T."/>
            <person name="Ohgane J."/>
            <person name="Ito S."/>
            <person name="Ogawa T."/>
            <person name="Hattori N."/>
            <person name="Tanaka S."/>
            <person name="Shiota K."/>
        </authorList>
    </citation>
    <scope>NUCLEOTIDE SEQUENCE [MRNA]</scope>
</reference>
<reference key="2">
    <citation type="journal article" date="2004" name="Genome Res.">
        <title>The status, quality, and expansion of the NIH full-length cDNA project: the Mammalian Gene Collection (MGC).</title>
        <authorList>
            <consortium name="The MGC Project Team"/>
        </authorList>
    </citation>
    <scope>NUCLEOTIDE SEQUENCE [LARGE SCALE MRNA]</scope>
    <source>
        <tissue>Testis</tissue>
    </source>
</reference>
<reference key="3">
    <citation type="journal article" date="2005" name="J. Biol. Chem.">
        <title>SphK1 and SphK2, sphingosine kinase isoenzymes with opposing functions in sphingolipid metabolism.</title>
        <authorList>
            <person name="Maceyka M."/>
            <person name="Sankala H."/>
            <person name="Hait N.C."/>
            <person name="Le Stunff H."/>
            <person name="Liu H."/>
            <person name="Toman R."/>
            <person name="Collier C."/>
            <person name="Zhang M."/>
            <person name="Satin L.S."/>
            <person name="Merrill A.H. Jr."/>
            <person name="Milstien S."/>
            <person name="Spiegel S."/>
        </authorList>
    </citation>
    <scope>SUBCELLULAR LOCATION</scope>
    <scope>MUTAGENESIS OF GLY-82</scope>
    <scope>FUNCTION</scope>
    <scope>CATALYTIC ACTIVITY</scope>
</reference>
<reference key="4">
    <citation type="journal article" date="2015" name="PLoS ONE">
        <title>The Molecular Mechanism of Amyloid beta42 Peptide Toxicity: The Role of Sphingosine Kinase-1 and Mitochondrial Sirtuins.</title>
        <authorList>
            <person name="Cieslik M."/>
            <person name="Czapski G.A."/>
            <person name="Strosznajder J.B."/>
        </authorList>
    </citation>
    <scope>FUNCTION</scope>
    <scope>INDUCTION BY AMYLOID-BETA PROTEIN 42</scope>
    <scope>ACTIVITY REGULATION</scope>
    <scope>CATALYTIC ACTIVITY</scope>
</reference>
<reference key="5">
    <citation type="journal article" date="2017" name="J. Neuroimmunol.">
        <title>Sphk1 mediates neuroinflammation and neuronal injury via TRAF2/NF-kappaB pathways in activated microglia in cerebral ischemia reperfusion.</title>
        <authorList>
            <person name="Su D."/>
            <person name="Cheng Y."/>
            <person name="Li S."/>
            <person name="Dai D."/>
            <person name="Zhang W."/>
            <person name="Lv M."/>
        </authorList>
    </citation>
    <scope>FUNCTION</scope>
    <scope>TISSUE SPECIFICITY</scope>
</reference>
<evidence type="ECO:0000250" key="1">
    <source>
        <dbReference type="UniProtKB" id="Q8CI15"/>
    </source>
</evidence>
<evidence type="ECO:0000250" key="2">
    <source>
        <dbReference type="UniProtKB" id="Q9NYA1"/>
    </source>
</evidence>
<evidence type="ECO:0000255" key="3">
    <source>
        <dbReference type="PROSITE-ProRule" id="PRU00783"/>
    </source>
</evidence>
<evidence type="ECO:0000256" key="4">
    <source>
        <dbReference type="SAM" id="MobiDB-lite"/>
    </source>
</evidence>
<evidence type="ECO:0000269" key="5">
    <source>
    </source>
</evidence>
<evidence type="ECO:0000269" key="6">
    <source>
    </source>
</evidence>
<evidence type="ECO:0000269" key="7">
    <source>
    </source>
</evidence>
<evidence type="ECO:0000305" key="8"/>
<evidence type="ECO:0000305" key="9">
    <source>
    </source>
</evidence>
<feature type="chain" id="PRO_0000333033" description="Sphingosine kinase 1">
    <location>
        <begin position="1"/>
        <end position="383"/>
    </location>
</feature>
<feature type="domain" description="DAGKc" evidence="3">
    <location>
        <begin position="12"/>
        <end position="159"/>
    </location>
</feature>
<feature type="region of interest" description="Disordered" evidence="4">
    <location>
        <begin position="363"/>
        <end position="383"/>
    </location>
</feature>
<feature type="short sequence motif" description="Nuclear export signal 1" evidence="2">
    <location>
        <begin position="147"/>
        <end position="155"/>
    </location>
</feature>
<feature type="short sequence motif" description="Nuclear export signal 2" evidence="2">
    <location>
        <begin position="161"/>
        <end position="169"/>
    </location>
</feature>
<feature type="compositionally biased region" description="Basic and acidic residues" evidence="4">
    <location>
        <begin position="372"/>
        <end position="383"/>
    </location>
</feature>
<feature type="active site" description="Proton donor/acceptor" evidence="2">
    <location>
        <position position="81"/>
    </location>
</feature>
<feature type="binding site" evidence="3">
    <location>
        <begin position="22"/>
        <end position="24"/>
    </location>
    <ligand>
        <name>ATP</name>
        <dbReference type="ChEBI" id="CHEBI:30616"/>
    </ligand>
</feature>
<feature type="binding site" evidence="3">
    <location>
        <begin position="54"/>
        <end position="58"/>
    </location>
    <ligand>
        <name>ATP</name>
        <dbReference type="ChEBI" id="CHEBI:30616"/>
    </ligand>
</feature>
<feature type="binding site" evidence="2">
    <location>
        <begin position="79"/>
        <end position="82"/>
    </location>
    <ligand>
        <name>substrate</name>
    </ligand>
</feature>
<feature type="binding site" evidence="3">
    <location>
        <position position="86"/>
    </location>
    <ligand>
        <name>ATP</name>
        <dbReference type="ChEBI" id="CHEBI:30616"/>
    </ligand>
</feature>
<feature type="binding site" evidence="3">
    <location>
        <begin position="111"/>
        <end position="113"/>
    </location>
    <ligand>
        <name>ATP</name>
        <dbReference type="ChEBI" id="CHEBI:30616"/>
    </ligand>
</feature>
<feature type="binding site" evidence="2">
    <location>
        <position position="178"/>
    </location>
    <ligand>
        <name>substrate</name>
    </ligand>
</feature>
<feature type="binding site" evidence="3">
    <location>
        <position position="185"/>
    </location>
    <ligand>
        <name>ATP</name>
        <dbReference type="ChEBI" id="CHEBI:30616"/>
    </ligand>
</feature>
<feature type="binding site" evidence="3">
    <location>
        <position position="191"/>
    </location>
    <ligand>
        <name>ATP</name>
        <dbReference type="ChEBI" id="CHEBI:30616"/>
    </ligand>
</feature>
<feature type="binding site" evidence="3">
    <location>
        <begin position="340"/>
        <end position="342"/>
    </location>
    <ligand>
        <name>ATP</name>
        <dbReference type="ChEBI" id="CHEBI:30616"/>
    </ligand>
</feature>
<feature type="modified residue" description="Phosphothreonine" evidence="2">
    <location>
        <position position="193"/>
    </location>
</feature>
<feature type="modified residue" description="Phosphoserine" evidence="2">
    <location>
        <position position="225"/>
    </location>
</feature>
<feature type="mutagenesis site" description="Loss of sphingosine kinase activity." evidence="5">
    <original>G</original>
    <variation>D</variation>
    <location>
        <position position="82"/>
    </location>
</feature>
<feature type="sequence conflict" description="In Ref. 2; AAH81738." evidence="8" ref="2">
    <original>V</original>
    <variation>L</variation>
    <location>
        <position position="299"/>
    </location>
</feature>
<proteinExistence type="evidence at protein level"/>